<name>L2MU_ADE12</name>
<organismHost>
    <name type="scientific">Homo sapiens</name>
    <name type="common">Human</name>
    <dbReference type="NCBI Taxonomy" id="9606"/>
</organismHost>
<sequence>MALTCRMRIPIPGYRGRPRRRKGLTGNGRFRRRSMRRRMKGGVLPFLIPLIAAAIGAVPGIASVALQASRKN</sequence>
<keyword id="KW-0903">Direct protein sequencing</keyword>
<keyword id="KW-0238">DNA-binding</keyword>
<keyword id="KW-0426">Late protein</keyword>
<keyword id="KW-1185">Reference proteome</keyword>
<keyword id="KW-0946">Virion</keyword>
<feature type="initiator methionine" description="Removed; by host" evidence="1">
    <location>
        <position position="1"/>
    </location>
</feature>
<feature type="propeptide" id="PRO_0000036522" evidence="2">
    <location>
        <begin position="2"/>
        <end position="27"/>
    </location>
</feature>
<feature type="peptide" id="PRO_0000036523" description="Late L2 mu core protein">
    <location>
        <begin position="28"/>
        <end position="42"/>
    </location>
</feature>
<feature type="propeptide" id="PRO_0000036524">
    <location>
        <begin position="43"/>
        <end position="72"/>
    </location>
</feature>
<feature type="site" description="Cleavage; by adenovirus protease">
    <location>
        <begin position="27"/>
        <end position="28"/>
    </location>
</feature>
<feature type="site" description="Cleavage; by adenovirus protease">
    <location>
        <begin position="42"/>
        <end position="43"/>
    </location>
</feature>
<accession>P35986</accession>
<comment type="function">
    <text evidence="1">The role of the precursor might be to condense the viral prochromatin for encapsidation by virtue of the two basic domains.</text>
</comment>
<comment type="subcellular location">
    <subcellularLocation>
        <location evidence="3">Virion</location>
    </subcellularLocation>
</comment>
<comment type="similarity">
    <text evidence="3">Belongs to the adenoviridae pX family.</text>
</comment>
<evidence type="ECO:0000250" key="1"/>
<evidence type="ECO:0000269" key="2">
    <source>
    </source>
</evidence>
<evidence type="ECO:0000305" key="3"/>
<dbReference type="EMBL" id="L02237">
    <property type="protein sequence ID" value="AAA42515.1"/>
    <property type="molecule type" value="Genomic_DNA"/>
</dbReference>
<dbReference type="EMBL" id="X73487">
    <property type="protein sequence ID" value="CAA51889.1"/>
    <property type="molecule type" value="Genomic_DNA"/>
</dbReference>
<dbReference type="PIR" id="A45393">
    <property type="entry name" value="A45393"/>
</dbReference>
<dbReference type="Proteomes" id="UP000004993">
    <property type="component" value="Genome"/>
</dbReference>
<dbReference type="GO" id="GO:0019013">
    <property type="term" value="C:viral nucleocapsid"/>
    <property type="evidence" value="ECO:0007669"/>
    <property type="project" value="InterPro"/>
</dbReference>
<dbReference type="GO" id="GO:0003677">
    <property type="term" value="F:DNA binding"/>
    <property type="evidence" value="ECO:0007669"/>
    <property type="project" value="UniProtKB-KW"/>
</dbReference>
<dbReference type="InterPro" id="IPR008393">
    <property type="entry name" value="Adenovirus_late_L2_mu_core"/>
</dbReference>
<dbReference type="Pfam" id="PF05829">
    <property type="entry name" value="Adeno_PX"/>
    <property type="match status" value="1"/>
</dbReference>
<organism>
    <name type="scientific">Human adenovirus A serotype 12</name>
    <name type="common">HAdV-12</name>
    <name type="synonym">Human adenovirus 12</name>
    <dbReference type="NCBI Taxonomy" id="28282"/>
    <lineage>
        <taxon>Viruses</taxon>
        <taxon>Varidnaviria</taxon>
        <taxon>Bamfordvirae</taxon>
        <taxon>Preplasmiviricota</taxon>
        <taxon>Tectiliviricetes</taxon>
        <taxon>Rowavirales</taxon>
        <taxon>Adenoviridae</taxon>
        <taxon>Mastadenovirus</taxon>
        <taxon>Human mastadenovirus A</taxon>
    </lineage>
</organism>
<protein>
    <recommendedName>
        <fullName>Late L2 mu core protein</fullName>
    </recommendedName>
    <alternativeName>
        <fullName>11 kDa core protein</fullName>
    </alternativeName>
    <alternativeName>
        <fullName>Protein X</fullName>
        <shortName>pX</shortName>
    </alternativeName>
    <alternativeName>
        <fullName>pMu</fullName>
    </alternativeName>
</protein>
<gene>
    <name type="primary">PX</name>
</gene>
<proteinExistence type="evidence at protein level"/>
<reference key="1">
    <citation type="journal article" date="1993" name="Virology">
        <title>Human adenovirus serotype 12 virion precursors pMu and pVI are cleaved at amino-terminal and carboxy-terminal sites that conform to the adenovirus 2 endoproteinase cleavage consensus sequence.</title>
        <authorList>
            <person name="Freimuth P."/>
            <person name="Anderson C.W."/>
        </authorList>
    </citation>
    <scope>NUCLEOTIDE SEQUENCE [GENOMIC DNA]</scope>
    <scope>PROTEIN SEQUENCE OF 28-42</scope>
    <source>
        <strain>Huie</strain>
    </source>
</reference>
<reference key="2">
    <citation type="journal article" date="1994" name="J. Virol.">
        <title>Nucleotide sequence of human adenovirus type 12 DNA: comparative functional analysis.</title>
        <authorList>
            <person name="Sprengel J."/>
            <person name="Schmitz B."/>
            <person name="Heuss-Neitzel D."/>
            <person name="Zock C."/>
            <person name="Doerfler W."/>
        </authorList>
    </citation>
    <scope>NUCLEOTIDE SEQUENCE [LARGE SCALE GENOMIC DNA]</scope>
</reference>